<dbReference type="EC" id="1.18.6.1"/>
<dbReference type="EMBL" id="M15238">
    <property type="protein sequence ID" value="AAA27375.1"/>
    <property type="molecule type" value="Genomic_DNA"/>
</dbReference>
<dbReference type="PIR" id="A91597">
    <property type="entry name" value="NIBCAT"/>
</dbReference>
<dbReference type="SMR" id="P06662"/>
<dbReference type="GO" id="GO:0016612">
    <property type="term" value="C:molybdenum-iron nitrogenase complex"/>
    <property type="evidence" value="ECO:0007669"/>
    <property type="project" value="InterPro"/>
</dbReference>
<dbReference type="GO" id="GO:0005524">
    <property type="term" value="F:ATP binding"/>
    <property type="evidence" value="ECO:0007669"/>
    <property type="project" value="UniProtKB-KW"/>
</dbReference>
<dbReference type="GO" id="GO:0051536">
    <property type="term" value="F:iron-sulfur cluster binding"/>
    <property type="evidence" value="ECO:0007669"/>
    <property type="project" value="UniProtKB-KW"/>
</dbReference>
<dbReference type="GO" id="GO:0046872">
    <property type="term" value="F:metal ion binding"/>
    <property type="evidence" value="ECO:0007669"/>
    <property type="project" value="UniProtKB-KW"/>
</dbReference>
<dbReference type="GO" id="GO:0016163">
    <property type="term" value="F:nitrogenase activity"/>
    <property type="evidence" value="ECO:0007669"/>
    <property type="project" value="UniProtKB-EC"/>
</dbReference>
<dbReference type="GO" id="GO:0009399">
    <property type="term" value="P:nitrogen fixation"/>
    <property type="evidence" value="ECO:0007669"/>
    <property type="project" value="UniProtKB-KW"/>
</dbReference>
<dbReference type="CDD" id="cd01976">
    <property type="entry name" value="Nitrogenase_MoFe_alpha"/>
    <property type="match status" value="1"/>
</dbReference>
<dbReference type="Gene3D" id="3.40.50.1980">
    <property type="entry name" value="Nitrogenase molybdenum iron protein domain"/>
    <property type="match status" value="3"/>
</dbReference>
<dbReference type="InterPro" id="IPR000510">
    <property type="entry name" value="Nase/OxRdtase_comp1"/>
</dbReference>
<dbReference type="InterPro" id="IPR010143">
    <property type="entry name" value="Nase_comp1_asu"/>
</dbReference>
<dbReference type="InterPro" id="IPR000318">
    <property type="entry name" value="Nase_comp1_CS"/>
</dbReference>
<dbReference type="InterPro" id="IPR005972">
    <property type="entry name" value="Nase_Mo-Fe_asu"/>
</dbReference>
<dbReference type="NCBIfam" id="TIGR01862">
    <property type="entry name" value="N2-ase-Ialpha"/>
    <property type="match status" value="1"/>
</dbReference>
<dbReference type="NCBIfam" id="TIGR01282">
    <property type="entry name" value="nifD"/>
    <property type="match status" value="1"/>
</dbReference>
<dbReference type="PANTHER" id="PTHR43457">
    <property type="entry name" value="NITROGENASE MOLYBDENUM-IRON PROTEIN ALPHA CHAIN"/>
    <property type="match status" value="1"/>
</dbReference>
<dbReference type="PANTHER" id="PTHR43457:SF1">
    <property type="entry name" value="NITROGENASE MOLYBDENUM-IRON PROTEIN ALPHA CHAIN"/>
    <property type="match status" value="1"/>
</dbReference>
<dbReference type="Pfam" id="PF00148">
    <property type="entry name" value="Oxidored_nitro"/>
    <property type="match status" value="1"/>
</dbReference>
<dbReference type="SUPFAM" id="SSF53807">
    <property type="entry name" value="Helical backbone' metal receptor"/>
    <property type="match status" value="1"/>
</dbReference>
<dbReference type="PROSITE" id="PS00699">
    <property type="entry name" value="NITROGENASE_1_1"/>
    <property type="match status" value="1"/>
</dbReference>
<dbReference type="PROSITE" id="PS00090">
    <property type="entry name" value="NITROGENASE_1_2"/>
    <property type="match status" value="1"/>
</dbReference>
<keyword id="KW-0067">ATP-binding</keyword>
<keyword id="KW-0408">Iron</keyword>
<keyword id="KW-0411">Iron-sulfur</keyword>
<keyword id="KW-0479">Metal-binding</keyword>
<keyword id="KW-0500">Molybdenum</keyword>
<keyword id="KW-0535">Nitrogen fixation</keyword>
<keyword id="KW-0547">Nucleotide-binding</keyword>
<keyword id="KW-0560">Oxidoreductase</keyword>
<sequence length="489" mass="55056">MSISAEDLSTQPQRRKLPEIAELIDETLKAYPEKFAKRRAKHLNVYEEGKSECDVKSNIKSVPGVMTIRGCAYAGSYGVVWSPVKDMIHISHGPVGCGHYARAGRRAYYIGTTGVDTYTTMHFTSDFQEKDIVFGGDKKLAKLMDELEELFPMSKGITVQSECPIGLIGDDIEAVSKKKAAEFGKPVVPNRCEGFRGVSQSLGHHIANDSIRDWVLDPAADKHPDFESTPYDVTLLGDYNIGGDWGSRIILEEMGLRVIAQWSGDAPSRSSTASSKSKLNLLHCYRSVNYITRHMEEKYGIPYIEFNFFGPTKIKESLRQIAAFFDESIQEKAEKAIAKYQPQWDAVVEKFRPRLEGKKVMLFVGGLRPGHTIGAFEDLGMEVIGTGYEFGHNDDYQRTTHEIKGNTLIYDDVTGYEFEKFAEKLRPDLVASGVKEKYIFQKMGFPFRQMHSWDYSGPYHGPDGFAIFARDMDMAVNNPVWGLTQAPWK</sequence>
<feature type="chain" id="PRO_0000153084" description="Nitrogenase molybdenum-iron protein alpha chain">
    <location>
        <begin position="1"/>
        <end position="489"/>
    </location>
</feature>
<feature type="binding site" evidence="1">
    <location>
        <position position="71"/>
    </location>
    <ligand>
        <name>[8Fe-7S] cluster</name>
        <dbReference type="ChEBI" id="CHEBI:21143"/>
        <note>ligand shared with beta chain</note>
    </ligand>
</feature>
<feature type="binding site" evidence="1">
    <location>
        <position position="97"/>
    </location>
    <ligand>
        <name>[8Fe-7S] cluster</name>
        <dbReference type="ChEBI" id="CHEBI:21143"/>
        <note>ligand shared with beta chain</note>
    </ligand>
</feature>
<feature type="binding site" evidence="1">
    <location>
        <position position="163"/>
    </location>
    <ligand>
        <name>[8Fe-7S] cluster</name>
        <dbReference type="ChEBI" id="CHEBI:21143"/>
        <note>ligand shared with beta chain</note>
    </ligand>
</feature>
<feature type="binding site" evidence="1">
    <location>
        <position position="284"/>
    </location>
    <ligand>
        <name>[7Fe-Mo-9S-C-homocitryl] cluster</name>
        <dbReference type="ChEBI" id="CHEBI:30409"/>
    </ligand>
</feature>
<feature type="binding site" evidence="1">
    <location>
        <position position="451"/>
    </location>
    <ligand>
        <name>[7Fe-Mo-9S-C-homocitryl] cluster</name>
        <dbReference type="ChEBI" id="CHEBI:30409"/>
    </ligand>
</feature>
<feature type="sequence conflict" description="In Ref. 2." evidence="2" ref="2">
    <original>V</original>
    <variation>C</variation>
    <location>
        <position position="55"/>
    </location>
</feature>
<feature type="sequence conflict" description="In Ref. 2." evidence="2" ref="2">
    <original>E</original>
    <variation>V</variation>
    <location>
        <position position="129"/>
    </location>
</feature>
<feature type="sequence conflict" description="In Ref. 2." evidence="2" ref="2">
    <original>S</original>
    <variation>F</variation>
    <location>
        <position position="176"/>
    </location>
</feature>
<name>NIFD_ACIFI</name>
<reference key="1">
    <citation type="journal article" date="1988" name="Gene">
        <title>Sequence and structural analysis of the alpha- and beta-dinitrogenase subunits of Thiobacillus ferrooxidans.</title>
        <authorList>
            <person name="Rawlings D.E."/>
        </authorList>
    </citation>
    <scope>NUCLEOTIDE SEQUENCE [GENOMIC DNA]</scope>
    <source>
        <strain>ATCC 33020 / DSM 29468 / JCM 18981 / 11Fe</strain>
    </source>
</reference>
<reference key="2">
    <citation type="journal article" date="1987" name="J. Bacteriol.">
        <title>Nucleotide sequence of the gene encoding the nitrogenase iron protein of Thiobacillus ferrooxidans.</title>
        <authorList>
            <person name="Pretorius I.-M."/>
            <person name="Rawlings D.E."/>
            <person name="O'Neill E.G."/>
            <person name="Jones W.A."/>
            <person name="Kirby R."/>
            <person name="Woods D.R."/>
        </authorList>
    </citation>
    <scope>NUCLEOTIDE SEQUENCE [GENOMIC DNA]</scope>
    <source>
        <strain>ATCC 33020 / DSM 29468 / JCM 18981 / 11Fe</strain>
    </source>
</reference>
<comment type="function">
    <text>This molybdenum-iron protein is part of the nitrogenase complex that catalyzes the key enzymatic reactions in nitrogen fixation.</text>
</comment>
<comment type="catalytic activity">
    <reaction>
        <text>N2 + 8 reduced [2Fe-2S]-[ferredoxin] + 16 ATP + 16 H2O = H2 + 8 oxidized [2Fe-2S]-[ferredoxin] + 2 NH4(+) + 16 ADP + 16 phosphate + 6 H(+)</text>
        <dbReference type="Rhea" id="RHEA:21448"/>
        <dbReference type="Rhea" id="RHEA-COMP:10000"/>
        <dbReference type="Rhea" id="RHEA-COMP:10001"/>
        <dbReference type="ChEBI" id="CHEBI:15377"/>
        <dbReference type="ChEBI" id="CHEBI:15378"/>
        <dbReference type="ChEBI" id="CHEBI:17997"/>
        <dbReference type="ChEBI" id="CHEBI:18276"/>
        <dbReference type="ChEBI" id="CHEBI:28938"/>
        <dbReference type="ChEBI" id="CHEBI:30616"/>
        <dbReference type="ChEBI" id="CHEBI:33737"/>
        <dbReference type="ChEBI" id="CHEBI:33738"/>
        <dbReference type="ChEBI" id="CHEBI:43474"/>
        <dbReference type="ChEBI" id="CHEBI:456216"/>
        <dbReference type="EC" id="1.18.6.1"/>
    </reaction>
</comment>
<comment type="cofactor">
    <cofactor evidence="1">
        <name>[8Fe-7S] cluster</name>
        <dbReference type="ChEBI" id="CHEBI:21143"/>
    </cofactor>
    <text evidence="1">Binds 1 [8Fe-7S] cluster per heterodimer.</text>
</comment>
<comment type="cofactor">
    <cofactor evidence="1">
        <name>[7Fe-Mo-9S-C-homocitryl] cluster</name>
        <dbReference type="ChEBI" id="CHEBI:30409"/>
    </cofactor>
    <text evidence="1">Binds 1 [7Fe-Mo-9S-C-homocitryl] cluster per subunit.</text>
</comment>
<comment type="subunit">
    <text>Tetramer of two alpha and two beta chains. Forms complex with the iron protein (nitrogenase component 2).</text>
</comment>
<comment type="similarity">
    <text evidence="2">Belongs to the NifD/NifK/NifE/NifN family.</text>
</comment>
<gene>
    <name type="primary">nifD</name>
</gene>
<protein>
    <recommendedName>
        <fullName>Nitrogenase molybdenum-iron protein alpha chain</fullName>
        <ecNumber>1.18.6.1</ecNumber>
    </recommendedName>
    <alternativeName>
        <fullName>Dinitrogenase</fullName>
    </alternativeName>
    <alternativeName>
        <fullName>Nitrogenase component I</fullName>
    </alternativeName>
</protein>
<organism>
    <name type="scientific">Acidithiobacillus ferridurans</name>
    <dbReference type="NCBI Taxonomy" id="1232575"/>
    <lineage>
        <taxon>Bacteria</taxon>
        <taxon>Pseudomonadati</taxon>
        <taxon>Pseudomonadota</taxon>
        <taxon>Acidithiobacillia</taxon>
        <taxon>Acidithiobacillales</taxon>
        <taxon>Acidithiobacillaceae</taxon>
        <taxon>Acidithiobacillus</taxon>
    </lineage>
</organism>
<accession>P06662</accession>
<proteinExistence type="inferred from homology"/>
<evidence type="ECO:0000250" key="1"/>
<evidence type="ECO:0000305" key="2"/>